<accession>P0C2P2</accession>
<accession>Q00291</accession>
<accession>Q0CLE2</accession>
<proteinExistence type="inferred from homology"/>
<evidence type="ECO:0000250" key="1"/>
<evidence type="ECO:0000250" key="2">
    <source>
        <dbReference type="UniProtKB" id="P00480"/>
    </source>
</evidence>
<evidence type="ECO:0000255" key="3"/>
<evidence type="ECO:0000305" key="4"/>
<gene>
    <name type="primary">arg1</name>
    <name type="synonym">arg-1</name>
</gene>
<name>OTC_ASPTE</name>
<comment type="catalytic activity">
    <reaction>
        <text>carbamoyl phosphate + L-ornithine = L-citrulline + phosphate + H(+)</text>
        <dbReference type="Rhea" id="RHEA:19513"/>
        <dbReference type="ChEBI" id="CHEBI:15378"/>
        <dbReference type="ChEBI" id="CHEBI:43474"/>
        <dbReference type="ChEBI" id="CHEBI:46911"/>
        <dbReference type="ChEBI" id="CHEBI:57743"/>
        <dbReference type="ChEBI" id="CHEBI:58228"/>
        <dbReference type="EC" id="2.1.3.3"/>
    </reaction>
</comment>
<comment type="pathway">
    <text>Amino-acid biosynthesis; L-arginine biosynthesis; L-arginine from L-ornithine and carbamoyl phosphate: step 1/3.</text>
</comment>
<comment type="subunit">
    <text evidence="1">Homotrimer.</text>
</comment>
<comment type="subcellular location">
    <subcellularLocation>
        <location>Mitochondrion matrix</location>
    </subcellularLocation>
</comment>
<comment type="similarity">
    <text evidence="4">Belongs to the aspartate/ornithine carbamoyltransferase superfamily. OTCase family.</text>
</comment>
<reference key="1">
    <citation type="journal article" date="1997" name="FEMS Microbiol. Lett.">
        <title>Cloning and molecular analysis of the Aspergillus terreus arg1 gene coding for an ornithine carbamoyltransferase.</title>
        <authorList>
            <person name="Ventura L."/>
            <person name="Perez-Gonzalez J.A."/>
            <person name="Ramon D."/>
        </authorList>
    </citation>
    <scope>NUCLEOTIDE SEQUENCE [GENOMIC DNA]</scope>
    <source>
        <strain>ATCC 10690 / CBS 377.64 / CECT 2663 / IFO 6346 / NRRL 571</strain>
    </source>
</reference>
<organism>
    <name type="scientific">Aspergillus terreus</name>
    <dbReference type="NCBI Taxonomy" id="33178"/>
    <lineage>
        <taxon>Eukaryota</taxon>
        <taxon>Fungi</taxon>
        <taxon>Dikarya</taxon>
        <taxon>Ascomycota</taxon>
        <taxon>Pezizomycotina</taxon>
        <taxon>Eurotiomycetes</taxon>
        <taxon>Eurotiomycetidae</taxon>
        <taxon>Eurotiales</taxon>
        <taxon>Aspergillaceae</taxon>
        <taxon>Aspergillus</taxon>
        <taxon>Aspergillus subgen. Circumdati</taxon>
    </lineage>
</organism>
<feature type="transit peptide" description="Mitochondrion" evidence="3">
    <location>
        <begin position="1"/>
        <end position="24"/>
    </location>
</feature>
<feature type="chain" id="PRO_0000042693" description="Ornithine carbamoyltransferase, mitochondrial">
    <location>
        <begin position="25"/>
        <end position="361"/>
    </location>
</feature>
<feature type="active site" description="Proton acceptor" evidence="2">
    <location>
        <position position="315"/>
    </location>
</feature>
<feature type="binding site" evidence="2">
    <location>
        <begin position="89"/>
        <end position="92"/>
    </location>
    <ligand>
        <name>carbamoyl phosphate</name>
        <dbReference type="ChEBI" id="CHEBI:58228"/>
    </ligand>
</feature>
<feature type="binding site" evidence="2">
    <location>
        <position position="140"/>
    </location>
    <ligand>
        <name>carbamoyl phosphate</name>
        <dbReference type="ChEBI" id="CHEBI:58228"/>
    </ligand>
</feature>
<feature type="binding site" evidence="2">
    <location>
        <position position="167"/>
    </location>
    <ligand>
        <name>carbamoyl phosphate</name>
        <dbReference type="ChEBI" id="CHEBI:58228"/>
    </ligand>
</feature>
<feature type="binding site" evidence="2">
    <location>
        <position position="170"/>
    </location>
    <ligand>
        <name>carbamoyl phosphate</name>
        <dbReference type="ChEBI" id="CHEBI:58228"/>
    </ligand>
</feature>
<feature type="binding site" evidence="2">
    <location>
        <position position="207"/>
    </location>
    <ligand>
        <name>L-ornithine</name>
        <dbReference type="ChEBI" id="CHEBI:46911"/>
    </ligand>
</feature>
<feature type="binding site" evidence="2">
    <location>
        <position position="273"/>
    </location>
    <ligand>
        <name>L-ornithine</name>
        <dbReference type="ChEBI" id="CHEBI:46911"/>
    </ligand>
</feature>
<feature type="binding site" evidence="2">
    <location>
        <position position="277"/>
    </location>
    <ligand>
        <name>L-ornithine</name>
        <dbReference type="ChEBI" id="CHEBI:46911"/>
    </ligand>
</feature>
<feature type="binding site" evidence="2">
    <location>
        <position position="278"/>
    </location>
    <ligand>
        <name>L-ornithine</name>
        <dbReference type="ChEBI" id="CHEBI:46911"/>
    </ligand>
</feature>
<feature type="binding site" evidence="2">
    <location>
        <begin position="315"/>
        <end position="316"/>
    </location>
    <ligand>
        <name>carbamoyl phosphate</name>
        <dbReference type="ChEBI" id="CHEBI:58228"/>
    </ligand>
</feature>
<feature type="binding site" evidence="2">
    <location>
        <position position="342"/>
    </location>
    <ligand>
        <name>carbamoyl phosphate</name>
        <dbReference type="ChEBI" id="CHEBI:58228"/>
    </ligand>
</feature>
<protein>
    <recommendedName>
        <fullName>Ornithine carbamoyltransferase, mitochondrial</fullName>
        <ecNumber>2.1.3.3</ecNumber>
    </recommendedName>
    <alternativeName>
        <fullName>Ornithine transcarbamylase</fullName>
        <shortName>OTCase</shortName>
    </alternativeName>
</protein>
<sequence>MIPTARCGALRQKIPVQAVRQYSSSTTLKTSPFAPRHLLSIADLTPTEFTTLVRNASSHKHSIKSGSIPTNLQGSLAGKTVAMMFSKRSTRTRISTEGATVQLGGHPMFLGKDDIQLGVNESLYDTAVVVSSMVSAIVARVGKHAEVADLAKHSTVPVINALCDSFHPLQAIADFQTIYETFTPKAHHLSSLGLEGLKIAWVGDANNVLFDMAISAAKMGVDLAVATPKGYEIPASMRELIQEAGKGVANPGKLIQTNVPEEAVKKADILVTDTWVSMGQEEESLKRMKAFEGFQITSELAKRGGANENWKFMHCLPRHPEEVSDEVFYSNRSLVFPEAENRLWAAISALEGFVVNKGKIA</sequence>
<dbReference type="EC" id="2.1.3.3"/>
<dbReference type="EMBL" id="Z67741">
    <property type="protein sequence ID" value="CAA91554.1"/>
    <property type="molecule type" value="Genomic_DNA"/>
</dbReference>
<dbReference type="SMR" id="P0C2P2"/>
<dbReference type="EnsemblFungi" id="EAU34561">
    <property type="protein sequence ID" value="EAU34561"/>
    <property type="gene ID" value="ATEG_05492"/>
</dbReference>
<dbReference type="VEuPathDB" id="FungiDB:ATEG_05492"/>
<dbReference type="OMA" id="DGNNVCN"/>
<dbReference type="UniPathway" id="UPA00068">
    <property type="reaction ID" value="UER00112"/>
</dbReference>
<dbReference type="GO" id="GO:0005829">
    <property type="term" value="C:cytosol"/>
    <property type="evidence" value="ECO:0007669"/>
    <property type="project" value="EnsemblFungi"/>
</dbReference>
<dbReference type="GO" id="GO:0005759">
    <property type="term" value="C:mitochondrial matrix"/>
    <property type="evidence" value="ECO:0007669"/>
    <property type="project" value="UniProtKB-SubCell"/>
</dbReference>
<dbReference type="GO" id="GO:1903269">
    <property type="term" value="C:ornithine carbamoyltransferase inhibitor complex"/>
    <property type="evidence" value="ECO:0007669"/>
    <property type="project" value="EnsemblFungi"/>
</dbReference>
<dbReference type="GO" id="GO:0016597">
    <property type="term" value="F:amino acid binding"/>
    <property type="evidence" value="ECO:0007669"/>
    <property type="project" value="InterPro"/>
</dbReference>
<dbReference type="GO" id="GO:0004585">
    <property type="term" value="F:ornithine carbamoyltransferase activity"/>
    <property type="evidence" value="ECO:0007669"/>
    <property type="project" value="UniProtKB-EC"/>
</dbReference>
<dbReference type="GO" id="GO:0042450">
    <property type="term" value="P:arginine biosynthetic process via ornithine"/>
    <property type="evidence" value="ECO:0007669"/>
    <property type="project" value="EnsemblFungi"/>
</dbReference>
<dbReference type="GO" id="GO:0019240">
    <property type="term" value="P:citrulline biosynthetic process"/>
    <property type="evidence" value="ECO:0007669"/>
    <property type="project" value="TreeGrafter"/>
</dbReference>
<dbReference type="GO" id="GO:0006526">
    <property type="term" value="P:L-arginine biosynthetic process"/>
    <property type="evidence" value="ECO:0007669"/>
    <property type="project" value="UniProtKB-UniPathway"/>
</dbReference>
<dbReference type="FunFam" id="3.40.50.1370:FF:000017">
    <property type="entry name" value="Ornithine carbamoyltransferase"/>
    <property type="match status" value="1"/>
</dbReference>
<dbReference type="FunFam" id="3.40.50.1370:FF:000009">
    <property type="entry name" value="Ornithine carbamoyltransferase, mitochondrial"/>
    <property type="match status" value="1"/>
</dbReference>
<dbReference type="Gene3D" id="3.40.50.1370">
    <property type="entry name" value="Aspartate/ornithine carbamoyltransferase"/>
    <property type="match status" value="2"/>
</dbReference>
<dbReference type="InterPro" id="IPR006132">
    <property type="entry name" value="Asp/Orn_carbamoyltranf_P-bd"/>
</dbReference>
<dbReference type="InterPro" id="IPR006130">
    <property type="entry name" value="Asp/Orn_carbamoylTrfase"/>
</dbReference>
<dbReference type="InterPro" id="IPR036901">
    <property type="entry name" value="Asp/Orn_carbamoylTrfase_sf"/>
</dbReference>
<dbReference type="InterPro" id="IPR006131">
    <property type="entry name" value="Asp_carbamoyltransf_Asp/Orn-bd"/>
</dbReference>
<dbReference type="InterPro" id="IPR002292">
    <property type="entry name" value="Orn/put_carbamltrans"/>
</dbReference>
<dbReference type="NCBIfam" id="TIGR00658">
    <property type="entry name" value="orni_carb_tr"/>
    <property type="match status" value="1"/>
</dbReference>
<dbReference type="NCBIfam" id="NF001986">
    <property type="entry name" value="PRK00779.1"/>
    <property type="match status" value="1"/>
</dbReference>
<dbReference type="PANTHER" id="PTHR45753">
    <property type="entry name" value="ORNITHINE CARBAMOYLTRANSFERASE, MITOCHONDRIAL"/>
    <property type="match status" value="1"/>
</dbReference>
<dbReference type="PANTHER" id="PTHR45753:SF3">
    <property type="entry name" value="ORNITHINE TRANSCARBAMYLASE, MITOCHONDRIAL"/>
    <property type="match status" value="1"/>
</dbReference>
<dbReference type="Pfam" id="PF00185">
    <property type="entry name" value="OTCace"/>
    <property type="match status" value="1"/>
</dbReference>
<dbReference type="Pfam" id="PF02729">
    <property type="entry name" value="OTCace_N"/>
    <property type="match status" value="1"/>
</dbReference>
<dbReference type="PRINTS" id="PR00100">
    <property type="entry name" value="AOTCASE"/>
</dbReference>
<dbReference type="PRINTS" id="PR00102">
    <property type="entry name" value="OTCASE"/>
</dbReference>
<dbReference type="SUPFAM" id="SSF53671">
    <property type="entry name" value="Aspartate/ornithine carbamoyltransferase"/>
    <property type="match status" value="1"/>
</dbReference>
<dbReference type="PROSITE" id="PS00097">
    <property type="entry name" value="CARBAMOYLTRANSFERASE"/>
    <property type="match status" value="1"/>
</dbReference>
<keyword id="KW-0028">Amino-acid biosynthesis</keyword>
<keyword id="KW-0055">Arginine biosynthesis</keyword>
<keyword id="KW-0496">Mitochondrion</keyword>
<keyword id="KW-0808">Transferase</keyword>
<keyword id="KW-0809">Transit peptide</keyword>